<proteinExistence type="inferred from homology"/>
<gene>
    <name evidence="1" type="primary">mtlD</name>
    <name type="ordered locus">lp_0233</name>
</gene>
<sequence>MLDVHFGAGNIGRGFIGETLADNGFKITFVDVNDTLIDELNKRNGYTIELAAEGQKHIEVHDVKGINNGKDPKAVAEEIAQADMVTTAIGPKILKFIAPLIADGLKLRQANNNTTPIDIIACENMIGGSQSLKKSVYESLNEDEQAWADQNAGFPNAAVDRIVPLQKHDDPLFVSVEPFKEWVIDKSQMKNPKIQLKGVDYADDLEPYIERKLFSVNTGHATVAYTGNMKGYKTIGEAVKDDSVVDQAKHVLGETGDLLIQKWGFDPEVHHAYQKKILSRFENPYISDDIERVGRTPIRKLGFNERFIRPIRELKERGRDYSALVDTVGEMFFFNYPNDSESVKLQQLLKDEPIEQVIRETTDLKDEDLVNEIKAAYEKHLAAAK</sequence>
<keyword id="KW-0520">NAD</keyword>
<keyword id="KW-0560">Oxidoreductase</keyword>
<keyword id="KW-1185">Reference proteome</keyword>
<evidence type="ECO:0000255" key="1">
    <source>
        <dbReference type="HAMAP-Rule" id="MF_00196"/>
    </source>
</evidence>
<reference key="1">
    <citation type="journal article" date="2003" name="Proc. Natl. Acad. Sci. U.S.A.">
        <title>Complete genome sequence of Lactobacillus plantarum WCFS1.</title>
        <authorList>
            <person name="Kleerebezem M."/>
            <person name="Boekhorst J."/>
            <person name="van Kranenburg R."/>
            <person name="Molenaar D."/>
            <person name="Kuipers O.P."/>
            <person name="Leer R."/>
            <person name="Tarchini R."/>
            <person name="Peters S.A."/>
            <person name="Sandbrink H.M."/>
            <person name="Fiers M.W.E.J."/>
            <person name="Stiekema W."/>
            <person name="Klein Lankhorst R.M."/>
            <person name="Bron P.A."/>
            <person name="Hoffer S.M."/>
            <person name="Nierop Groot M.N."/>
            <person name="Kerkhoven R."/>
            <person name="De Vries M."/>
            <person name="Ursing B."/>
            <person name="De Vos W.M."/>
            <person name="Siezen R.J."/>
        </authorList>
    </citation>
    <scope>NUCLEOTIDE SEQUENCE [LARGE SCALE GENOMIC DNA]</scope>
    <source>
        <strain>ATCC BAA-793 / NCIMB 8826 / WCFS1</strain>
    </source>
</reference>
<reference key="2">
    <citation type="journal article" date="2012" name="J. Bacteriol.">
        <title>Complete resequencing and reannotation of the Lactobacillus plantarum WCFS1 genome.</title>
        <authorList>
            <person name="Siezen R.J."/>
            <person name="Francke C."/>
            <person name="Renckens B."/>
            <person name="Boekhorst J."/>
            <person name="Wels M."/>
            <person name="Kleerebezem M."/>
            <person name="van Hijum S.A."/>
        </authorList>
    </citation>
    <scope>NUCLEOTIDE SEQUENCE [LARGE SCALE GENOMIC DNA]</scope>
    <scope>GENOME REANNOTATION</scope>
    <source>
        <strain>ATCC BAA-793 / NCIMB 8826 / WCFS1</strain>
    </source>
</reference>
<organism>
    <name type="scientific">Lactiplantibacillus plantarum (strain ATCC BAA-793 / NCIMB 8826 / WCFS1)</name>
    <name type="common">Lactobacillus plantarum</name>
    <dbReference type="NCBI Taxonomy" id="220668"/>
    <lineage>
        <taxon>Bacteria</taxon>
        <taxon>Bacillati</taxon>
        <taxon>Bacillota</taxon>
        <taxon>Bacilli</taxon>
        <taxon>Lactobacillales</taxon>
        <taxon>Lactobacillaceae</taxon>
        <taxon>Lactiplantibacillus</taxon>
    </lineage>
</organism>
<accession>Q88ZS1</accession>
<accession>F9UT35</accession>
<feature type="chain" id="PRO_0000170709" description="Mannitol-1-phosphate 5-dehydrogenase">
    <location>
        <begin position="1"/>
        <end position="385"/>
    </location>
</feature>
<feature type="binding site" evidence="1">
    <location>
        <begin position="3"/>
        <end position="14"/>
    </location>
    <ligand>
        <name>NAD(+)</name>
        <dbReference type="ChEBI" id="CHEBI:57540"/>
    </ligand>
</feature>
<comment type="catalytic activity">
    <reaction evidence="1">
        <text>D-mannitol 1-phosphate + NAD(+) = beta-D-fructose 6-phosphate + NADH + H(+)</text>
        <dbReference type="Rhea" id="RHEA:19661"/>
        <dbReference type="ChEBI" id="CHEBI:15378"/>
        <dbReference type="ChEBI" id="CHEBI:57540"/>
        <dbReference type="ChEBI" id="CHEBI:57634"/>
        <dbReference type="ChEBI" id="CHEBI:57945"/>
        <dbReference type="ChEBI" id="CHEBI:61381"/>
        <dbReference type="EC" id="1.1.1.17"/>
    </reaction>
</comment>
<comment type="similarity">
    <text evidence="1">Belongs to the mannitol dehydrogenase family.</text>
</comment>
<name>MTLD_LACPL</name>
<protein>
    <recommendedName>
        <fullName evidence="1">Mannitol-1-phosphate 5-dehydrogenase</fullName>
        <ecNumber evidence="1">1.1.1.17</ecNumber>
    </recommendedName>
</protein>
<dbReference type="EC" id="1.1.1.17" evidence="1"/>
<dbReference type="EMBL" id="AL935263">
    <property type="protein sequence ID" value="CCC77766.1"/>
    <property type="molecule type" value="Genomic_DNA"/>
</dbReference>
<dbReference type="RefSeq" id="WP_011100927.1">
    <property type="nucleotide sequence ID" value="NC_004567.2"/>
</dbReference>
<dbReference type="RefSeq" id="YP_004888280.1">
    <property type="nucleotide sequence ID" value="NC_004567.2"/>
</dbReference>
<dbReference type="SMR" id="Q88ZS1"/>
<dbReference type="STRING" id="220668.lp_0233"/>
<dbReference type="EnsemblBacteria" id="CCC77766">
    <property type="protein sequence ID" value="CCC77766"/>
    <property type="gene ID" value="lp_0233"/>
</dbReference>
<dbReference type="KEGG" id="lpl:lp_0233"/>
<dbReference type="PATRIC" id="fig|220668.9.peg.194"/>
<dbReference type="eggNOG" id="COG0246">
    <property type="taxonomic scope" value="Bacteria"/>
</dbReference>
<dbReference type="HOGENOM" id="CLU_036089_2_0_9"/>
<dbReference type="OrthoDB" id="271711at2"/>
<dbReference type="PhylomeDB" id="Q88ZS1"/>
<dbReference type="Proteomes" id="UP000000432">
    <property type="component" value="Chromosome"/>
</dbReference>
<dbReference type="GO" id="GO:0005829">
    <property type="term" value="C:cytosol"/>
    <property type="evidence" value="ECO:0007669"/>
    <property type="project" value="TreeGrafter"/>
</dbReference>
<dbReference type="GO" id="GO:0008926">
    <property type="term" value="F:mannitol-1-phosphate 5-dehydrogenase activity"/>
    <property type="evidence" value="ECO:0007669"/>
    <property type="project" value="UniProtKB-UniRule"/>
</dbReference>
<dbReference type="GO" id="GO:0019592">
    <property type="term" value="P:mannitol catabolic process"/>
    <property type="evidence" value="ECO:0007669"/>
    <property type="project" value="TreeGrafter"/>
</dbReference>
<dbReference type="Gene3D" id="1.10.1040.10">
    <property type="entry name" value="N-(1-d-carboxylethyl)-l-norvaline Dehydrogenase, domain 2"/>
    <property type="match status" value="1"/>
</dbReference>
<dbReference type="Gene3D" id="3.40.50.720">
    <property type="entry name" value="NAD(P)-binding Rossmann-like Domain"/>
    <property type="match status" value="1"/>
</dbReference>
<dbReference type="HAMAP" id="MF_00196">
    <property type="entry name" value="Mannitol_dehydrog"/>
    <property type="match status" value="1"/>
</dbReference>
<dbReference type="InterPro" id="IPR008927">
    <property type="entry name" value="6-PGluconate_DH-like_C_sf"/>
</dbReference>
<dbReference type="InterPro" id="IPR013328">
    <property type="entry name" value="6PGD_dom2"/>
</dbReference>
<dbReference type="InterPro" id="IPR023028">
    <property type="entry name" value="Mannitol_1_phos_5_DH"/>
</dbReference>
<dbReference type="InterPro" id="IPR000669">
    <property type="entry name" value="Mannitol_DH"/>
</dbReference>
<dbReference type="InterPro" id="IPR013118">
    <property type="entry name" value="Mannitol_DH_C"/>
</dbReference>
<dbReference type="InterPro" id="IPR013131">
    <property type="entry name" value="Mannitol_DH_N"/>
</dbReference>
<dbReference type="InterPro" id="IPR036291">
    <property type="entry name" value="NAD(P)-bd_dom_sf"/>
</dbReference>
<dbReference type="NCBIfam" id="NF002646">
    <property type="entry name" value="PRK02318.1-2"/>
    <property type="match status" value="1"/>
</dbReference>
<dbReference type="NCBIfam" id="NF002647">
    <property type="entry name" value="PRK02318.1-3"/>
    <property type="match status" value="1"/>
</dbReference>
<dbReference type="NCBIfam" id="NF002652">
    <property type="entry name" value="PRK02318.2-5"/>
    <property type="match status" value="1"/>
</dbReference>
<dbReference type="PANTHER" id="PTHR30524:SF0">
    <property type="entry name" value="ALTRONATE OXIDOREDUCTASE-RELATED"/>
    <property type="match status" value="1"/>
</dbReference>
<dbReference type="PANTHER" id="PTHR30524">
    <property type="entry name" value="MANNITOL-1-PHOSPHATE 5-DEHYDROGENASE"/>
    <property type="match status" value="1"/>
</dbReference>
<dbReference type="Pfam" id="PF01232">
    <property type="entry name" value="Mannitol_dh"/>
    <property type="match status" value="1"/>
</dbReference>
<dbReference type="Pfam" id="PF08125">
    <property type="entry name" value="Mannitol_dh_C"/>
    <property type="match status" value="1"/>
</dbReference>
<dbReference type="PRINTS" id="PR00084">
    <property type="entry name" value="MTLDHDRGNASE"/>
</dbReference>
<dbReference type="SUPFAM" id="SSF48179">
    <property type="entry name" value="6-phosphogluconate dehydrogenase C-terminal domain-like"/>
    <property type="match status" value="1"/>
</dbReference>
<dbReference type="SUPFAM" id="SSF51735">
    <property type="entry name" value="NAD(P)-binding Rossmann-fold domains"/>
    <property type="match status" value="1"/>
</dbReference>